<proteinExistence type="inferred from homology"/>
<organism>
    <name type="scientific">Thiobacillus denitrificans (strain ATCC 25259 / T1)</name>
    <dbReference type="NCBI Taxonomy" id="292415"/>
    <lineage>
        <taxon>Bacteria</taxon>
        <taxon>Pseudomonadati</taxon>
        <taxon>Pseudomonadota</taxon>
        <taxon>Betaproteobacteria</taxon>
        <taxon>Nitrosomonadales</taxon>
        <taxon>Thiobacillaceae</taxon>
        <taxon>Thiobacillus</taxon>
    </lineage>
</organism>
<reference key="1">
    <citation type="journal article" date="2006" name="J. Bacteriol.">
        <title>The genome sequence of the obligately chemolithoautotrophic, facultatively anaerobic bacterium Thiobacillus denitrificans.</title>
        <authorList>
            <person name="Beller H.R."/>
            <person name="Chain P.S."/>
            <person name="Letain T.E."/>
            <person name="Chakicherla A."/>
            <person name="Larimer F.W."/>
            <person name="Richardson P.M."/>
            <person name="Coleman M.A."/>
            <person name="Wood A.P."/>
            <person name="Kelly D.P."/>
        </authorList>
    </citation>
    <scope>NUCLEOTIDE SEQUENCE [LARGE SCALE GENOMIC DNA]</scope>
    <source>
        <strain>ATCC 25259 / T1</strain>
    </source>
</reference>
<dbReference type="EMBL" id="CP000116">
    <property type="protein sequence ID" value="AAZ98408.1"/>
    <property type="molecule type" value="Genomic_DNA"/>
</dbReference>
<dbReference type="RefSeq" id="WP_011312967.1">
    <property type="nucleotide sequence ID" value="NC_007404.1"/>
</dbReference>
<dbReference type="STRING" id="292415.Tbd_2455"/>
<dbReference type="KEGG" id="tbd:Tbd_2455"/>
<dbReference type="eggNOG" id="COG1970">
    <property type="taxonomic scope" value="Bacteria"/>
</dbReference>
<dbReference type="HOGENOM" id="CLU_095787_0_1_4"/>
<dbReference type="OrthoDB" id="9810350at2"/>
<dbReference type="Proteomes" id="UP000008291">
    <property type="component" value="Chromosome"/>
</dbReference>
<dbReference type="GO" id="GO:0005886">
    <property type="term" value="C:plasma membrane"/>
    <property type="evidence" value="ECO:0007669"/>
    <property type="project" value="UniProtKB-SubCell"/>
</dbReference>
<dbReference type="GO" id="GO:0008381">
    <property type="term" value="F:mechanosensitive monoatomic ion channel activity"/>
    <property type="evidence" value="ECO:0007669"/>
    <property type="project" value="UniProtKB-UniRule"/>
</dbReference>
<dbReference type="Gene3D" id="1.10.1200.120">
    <property type="entry name" value="Large-conductance mechanosensitive channel, MscL, domain 1"/>
    <property type="match status" value="1"/>
</dbReference>
<dbReference type="HAMAP" id="MF_00115">
    <property type="entry name" value="MscL"/>
    <property type="match status" value="1"/>
</dbReference>
<dbReference type="InterPro" id="IPR001185">
    <property type="entry name" value="MS_channel"/>
</dbReference>
<dbReference type="InterPro" id="IPR037673">
    <property type="entry name" value="MSC/AndL"/>
</dbReference>
<dbReference type="InterPro" id="IPR036019">
    <property type="entry name" value="MscL_channel"/>
</dbReference>
<dbReference type="NCBIfam" id="TIGR00220">
    <property type="entry name" value="mscL"/>
    <property type="match status" value="1"/>
</dbReference>
<dbReference type="NCBIfam" id="NF010557">
    <property type="entry name" value="PRK13952.1"/>
    <property type="match status" value="1"/>
</dbReference>
<dbReference type="PANTHER" id="PTHR30266:SF2">
    <property type="entry name" value="LARGE-CONDUCTANCE MECHANOSENSITIVE CHANNEL"/>
    <property type="match status" value="1"/>
</dbReference>
<dbReference type="PANTHER" id="PTHR30266">
    <property type="entry name" value="MECHANOSENSITIVE CHANNEL MSCL"/>
    <property type="match status" value="1"/>
</dbReference>
<dbReference type="Pfam" id="PF01741">
    <property type="entry name" value="MscL"/>
    <property type="match status" value="1"/>
</dbReference>
<dbReference type="PRINTS" id="PR01264">
    <property type="entry name" value="MECHCHANNEL"/>
</dbReference>
<dbReference type="SUPFAM" id="SSF81330">
    <property type="entry name" value="Gated mechanosensitive channel"/>
    <property type="match status" value="1"/>
</dbReference>
<comment type="function">
    <text evidence="1">Channel that opens in response to stretch forces in the membrane lipid bilayer. May participate in the regulation of osmotic pressure changes within the cell.</text>
</comment>
<comment type="subunit">
    <text evidence="1">Homopentamer.</text>
</comment>
<comment type="subcellular location">
    <subcellularLocation>
        <location evidence="1">Cell inner membrane</location>
        <topology evidence="1">Multi-pass membrane protein</topology>
    </subcellularLocation>
</comment>
<comment type="similarity">
    <text evidence="1">Belongs to the MscL family.</text>
</comment>
<protein>
    <recommendedName>
        <fullName evidence="1">Large-conductance mechanosensitive channel</fullName>
    </recommendedName>
</protein>
<keyword id="KW-0997">Cell inner membrane</keyword>
<keyword id="KW-1003">Cell membrane</keyword>
<keyword id="KW-0407">Ion channel</keyword>
<keyword id="KW-0406">Ion transport</keyword>
<keyword id="KW-0472">Membrane</keyword>
<keyword id="KW-1185">Reference proteome</keyword>
<keyword id="KW-0812">Transmembrane</keyword>
<keyword id="KW-1133">Transmembrane helix</keyword>
<keyword id="KW-0813">Transport</keyword>
<evidence type="ECO:0000255" key="1">
    <source>
        <dbReference type="HAMAP-Rule" id="MF_00115"/>
    </source>
</evidence>
<sequence length="141" mass="14992">MSFASEFKQFIAKGNAMDLAVGVIIGAAFSKIVASIVDDLIMPIVGAVFGGFDFSNLFIALGSVPEGVALTLAEVRKAGVPVLAYGNFVTVLLNFLILALIVFIIVRQINRLKRPAPGAAPAAPPEDIVLLREIRDALRQK</sequence>
<accession>Q3SG48</accession>
<gene>
    <name evidence="1" type="primary">mscL</name>
    <name type="ordered locus">Tbd_2455</name>
</gene>
<name>MSCL_THIDA</name>
<feature type="chain" id="PRO_0000238048" description="Large-conductance mechanosensitive channel">
    <location>
        <begin position="1"/>
        <end position="141"/>
    </location>
</feature>
<feature type="transmembrane region" description="Helical" evidence="1">
    <location>
        <begin position="17"/>
        <end position="37"/>
    </location>
</feature>
<feature type="transmembrane region" description="Helical" evidence="1">
    <location>
        <begin position="40"/>
        <end position="60"/>
    </location>
</feature>
<feature type="transmembrane region" description="Helical" evidence="1">
    <location>
        <begin position="86"/>
        <end position="106"/>
    </location>
</feature>